<comment type="similarity">
    <text evidence="1">Belongs to the bacterial ribosomal protein bL34 family.</text>
</comment>
<keyword id="KW-0687">Ribonucleoprotein</keyword>
<keyword id="KW-0689">Ribosomal protein</keyword>
<proteinExistence type="inferred from homology"/>
<name>RL34_XANAC</name>
<protein>
    <recommendedName>
        <fullName evidence="1">Large ribosomal subunit protein bL34</fullName>
    </recommendedName>
    <alternativeName>
        <fullName evidence="3">50S ribosomal protein L34</fullName>
    </alternativeName>
</protein>
<dbReference type="EMBL" id="AE008923">
    <property type="protein sequence ID" value="AAM39204.1"/>
    <property type="molecule type" value="Genomic_DNA"/>
</dbReference>
<dbReference type="RefSeq" id="WP_002805908.1">
    <property type="nucleotide sequence ID" value="NC_003919.1"/>
</dbReference>
<dbReference type="SMR" id="P66261"/>
<dbReference type="GeneID" id="97512525"/>
<dbReference type="KEGG" id="xac:XAC4374"/>
<dbReference type="eggNOG" id="COG0230">
    <property type="taxonomic scope" value="Bacteria"/>
</dbReference>
<dbReference type="HOGENOM" id="CLU_129938_2_0_6"/>
<dbReference type="Proteomes" id="UP000000576">
    <property type="component" value="Chromosome"/>
</dbReference>
<dbReference type="GO" id="GO:1990904">
    <property type="term" value="C:ribonucleoprotein complex"/>
    <property type="evidence" value="ECO:0007669"/>
    <property type="project" value="UniProtKB-KW"/>
</dbReference>
<dbReference type="GO" id="GO:0005840">
    <property type="term" value="C:ribosome"/>
    <property type="evidence" value="ECO:0007669"/>
    <property type="project" value="UniProtKB-KW"/>
</dbReference>
<dbReference type="GO" id="GO:0003735">
    <property type="term" value="F:structural constituent of ribosome"/>
    <property type="evidence" value="ECO:0007669"/>
    <property type="project" value="InterPro"/>
</dbReference>
<dbReference type="GO" id="GO:0006412">
    <property type="term" value="P:translation"/>
    <property type="evidence" value="ECO:0007669"/>
    <property type="project" value="UniProtKB-UniRule"/>
</dbReference>
<dbReference type="FunFam" id="1.10.287.3980:FF:000001">
    <property type="entry name" value="Mitochondrial ribosomal protein L34"/>
    <property type="match status" value="1"/>
</dbReference>
<dbReference type="Gene3D" id="1.10.287.3980">
    <property type="match status" value="1"/>
</dbReference>
<dbReference type="HAMAP" id="MF_00391">
    <property type="entry name" value="Ribosomal_bL34"/>
    <property type="match status" value="1"/>
</dbReference>
<dbReference type="InterPro" id="IPR000271">
    <property type="entry name" value="Ribosomal_bL34"/>
</dbReference>
<dbReference type="InterPro" id="IPR020939">
    <property type="entry name" value="Ribosomal_bL34_CS"/>
</dbReference>
<dbReference type="NCBIfam" id="TIGR01030">
    <property type="entry name" value="rpmH_bact"/>
    <property type="match status" value="1"/>
</dbReference>
<dbReference type="PANTHER" id="PTHR14503:SF4">
    <property type="entry name" value="LARGE RIBOSOMAL SUBUNIT PROTEIN BL34M"/>
    <property type="match status" value="1"/>
</dbReference>
<dbReference type="PANTHER" id="PTHR14503">
    <property type="entry name" value="MITOCHONDRIAL RIBOSOMAL PROTEIN 34 FAMILY MEMBER"/>
    <property type="match status" value="1"/>
</dbReference>
<dbReference type="Pfam" id="PF00468">
    <property type="entry name" value="Ribosomal_L34"/>
    <property type="match status" value="1"/>
</dbReference>
<dbReference type="PROSITE" id="PS00784">
    <property type="entry name" value="RIBOSOMAL_L34"/>
    <property type="match status" value="1"/>
</dbReference>
<accession>P66261</accession>
<accession>Q8NKZ4</accession>
<feature type="chain" id="PRO_0000187507" description="Large ribosomal subunit protein bL34">
    <location>
        <begin position="1"/>
        <end position="46"/>
    </location>
</feature>
<feature type="region of interest" description="Disordered" evidence="2">
    <location>
        <begin position="1"/>
        <end position="46"/>
    </location>
</feature>
<feature type="compositionally biased region" description="Polar residues" evidence="2">
    <location>
        <begin position="1"/>
        <end position="11"/>
    </location>
</feature>
<feature type="compositionally biased region" description="Basic residues" evidence="2">
    <location>
        <begin position="32"/>
        <end position="46"/>
    </location>
</feature>
<gene>
    <name evidence="1" type="primary">rpmH</name>
    <name type="ordered locus">XAC4374</name>
</gene>
<reference key="1">
    <citation type="journal article" date="2002" name="Nature">
        <title>Comparison of the genomes of two Xanthomonas pathogens with differing host specificities.</title>
        <authorList>
            <person name="da Silva A.C.R."/>
            <person name="Ferro J.A."/>
            <person name="Reinach F.C."/>
            <person name="Farah C.S."/>
            <person name="Furlan L.R."/>
            <person name="Quaggio R.B."/>
            <person name="Monteiro-Vitorello C.B."/>
            <person name="Van Sluys M.A."/>
            <person name="Almeida N.F. Jr."/>
            <person name="Alves L.M.C."/>
            <person name="do Amaral A.M."/>
            <person name="Bertolini M.C."/>
            <person name="Camargo L.E.A."/>
            <person name="Camarotte G."/>
            <person name="Cannavan F."/>
            <person name="Cardozo J."/>
            <person name="Chambergo F."/>
            <person name="Ciapina L.P."/>
            <person name="Cicarelli R.M.B."/>
            <person name="Coutinho L.L."/>
            <person name="Cursino-Santos J.R."/>
            <person name="El-Dorry H."/>
            <person name="Faria J.B."/>
            <person name="Ferreira A.J.S."/>
            <person name="Ferreira R.C.C."/>
            <person name="Ferro M.I.T."/>
            <person name="Formighieri E.F."/>
            <person name="Franco M.C."/>
            <person name="Greggio C.C."/>
            <person name="Gruber A."/>
            <person name="Katsuyama A.M."/>
            <person name="Kishi L.T."/>
            <person name="Leite R.P."/>
            <person name="Lemos E.G.M."/>
            <person name="Lemos M.V.F."/>
            <person name="Locali E.C."/>
            <person name="Machado M.A."/>
            <person name="Madeira A.M.B.N."/>
            <person name="Martinez-Rossi N.M."/>
            <person name="Martins E.C."/>
            <person name="Meidanis J."/>
            <person name="Menck C.F.M."/>
            <person name="Miyaki C.Y."/>
            <person name="Moon D.H."/>
            <person name="Moreira L.M."/>
            <person name="Novo M.T.M."/>
            <person name="Okura V.K."/>
            <person name="Oliveira M.C."/>
            <person name="Oliveira V.R."/>
            <person name="Pereira H.A."/>
            <person name="Rossi A."/>
            <person name="Sena J.A.D."/>
            <person name="Silva C."/>
            <person name="de Souza R.F."/>
            <person name="Spinola L.A.F."/>
            <person name="Takita M.A."/>
            <person name="Tamura R.E."/>
            <person name="Teixeira E.C."/>
            <person name="Tezza R.I.D."/>
            <person name="Trindade dos Santos M."/>
            <person name="Truffi D."/>
            <person name="Tsai S.M."/>
            <person name="White F.F."/>
            <person name="Setubal J.C."/>
            <person name="Kitajima J.P."/>
        </authorList>
    </citation>
    <scope>NUCLEOTIDE SEQUENCE [LARGE SCALE GENOMIC DNA]</scope>
    <source>
        <strain>306</strain>
    </source>
</reference>
<evidence type="ECO:0000255" key="1">
    <source>
        <dbReference type="HAMAP-Rule" id="MF_00391"/>
    </source>
</evidence>
<evidence type="ECO:0000256" key="2">
    <source>
        <dbReference type="SAM" id="MobiDB-lite"/>
    </source>
</evidence>
<evidence type="ECO:0000305" key="3"/>
<organism>
    <name type="scientific">Xanthomonas axonopodis pv. citri (strain 306)</name>
    <dbReference type="NCBI Taxonomy" id="190486"/>
    <lineage>
        <taxon>Bacteria</taxon>
        <taxon>Pseudomonadati</taxon>
        <taxon>Pseudomonadota</taxon>
        <taxon>Gammaproteobacteria</taxon>
        <taxon>Lysobacterales</taxon>
        <taxon>Lysobacteraceae</taxon>
        <taxon>Xanthomonas</taxon>
    </lineage>
</organism>
<sequence>MATKRTFQPSNLKRARDHGFRARMATADGRKILARRRAKGRKRLSA</sequence>